<proteinExistence type="inferred from homology"/>
<accession>Q0MQC6</accession>
<dbReference type="EMBL" id="DQ885708">
    <property type="protein sequence ID" value="ABH12217.1"/>
    <property type="molecule type" value="mRNA"/>
</dbReference>
<dbReference type="SMR" id="Q0MQC6"/>
<dbReference type="FunCoup" id="Q0MQC6">
    <property type="interactions" value="607"/>
</dbReference>
<dbReference type="STRING" id="9598.ENSPTRP00000011334"/>
<dbReference type="PaxDb" id="9598-ENSPTRP00000011334"/>
<dbReference type="eggNOG" id="ENOG502S6X0">
    <property type="taxonomic scope" value="Eukaryota"/>
</dbReference>
<dbReference type="InParanoid" id="Q0MQC6"/>
<dbReference type="Proteomes" id="UP000002277">
    <property type="component" value="Unplaced"/>
</dbReference>
<dbReference type="GO" id="GO:0005743">
    <property type="term" value="C:mitochondrial inner membrane"/>
    <property type="evidence" value="ECO:0007669"/>
    <property type="project" value="UniProtKB-SubCell"/>
</dbReference>
<dbReference type="GO" id="GO:0045271">
    <property type="term" value="C:respiratory chain complex I"/>
    <property type="evidence" value="ECO:0000250"/>
    <property type="project" value="UniProtKB"/>
</dbReference>
<dbReference type="InterPro" id="IPR012575">
    <property type="entry name" value="NDUB1"/>
</dbReference>
<dbReference type="PANTHER" id="PTHR15222">
    <property type="entry name" value="NADH DEHYDROGENASE [UBIQUINONE] 1 BETA SUBCOMPLEX SUBUNIT 1"/>
    <property type="match status" value="1"/>
</dbReference>
<dbReference type="PANTHER" id="PTHR15222:SF2">
    <property type="entry name" value="NADH DEHYDROGENASE [UBIQUINONE] 1 BETA SUBCOMPLEX SUBUNIT 1"/>
    <property type="match status" value="1"/>
</dbReference>
<dbReference type="Pfam" id="PF08040">
    <property type="entry name" value="NADH_oxidored"/>
    <property type="match status" value="1"/>
</dbReference>
<protein>
    <recommendedName>
        <fullName>NADH dehydrogenase [ubiquinone] 1 beta subcomplex subunit 1</fullName>
    </recommendedName>
    <alternativeName>
        <fullName>Complex I-MNLL</fullName>
        <shortName>CI-MNLL</shortName>
    </alternativeName>
    <alternativeName>
        <fullName>NADH-ubiquinone oxidoreductase MNLL subunit</fullName>
    </alternativeName>
</protein>
<keyword id="KW-0249">Electron transport</keyword>
<keyword id="KW-0472">Membrane</keyword>
<keyword id="KW-0496">Mitochondrion</keyword>
<keyword id="KW-0999">Mitochondrion inner membrane</keyword>
<keyword id="KW-1185">Reference proteome</keyword>
<keyword id="KW-0679">Respiratory chain</keyword>
<keyword id="KW-0812">Transmembrane</keyword>
<keyword id="KW-1133">Transmembrane helix</keyword>
<keyword id="KW-0813">Transport</keyword>
<sequence>MVNLLQIVRDHWVHVLVPMGFVIGCYLDRKSDERLTAFRNKSMLFKRELQPSEEVTWK</sequence>
<name>NDUB1_PANTR</name>
<organism>
    <name type="scientific">Pan troglodytes</name>
    <name type="common">Chimpanzee</name>
    <dbReference type="NCBI Taxonomy" id="9598"/>
    <lineage>
        <taxon>Eukaryota</taxon>
        <taxon>Metazoa</taxon>
        <taxon>Chordata</taxon>
        <taxon>Craniata</taxon>
        <taxon>Vertebrata</taxon>
        <taxon>Euteleostomi</taxon>
        <taxon>Mammalia</taxon>
        <taxon>Eutheria</taxon>
        <taxon>Euarchontoglires</taxon>
        <taxon>Primates</taxon>
        <taxon>Haplorrhini</taxon>
        <taxon>Catarrhini</taxon>
        <taxon>Hominidae</taxon>
        <taxon>Pan</taxon>
    </lineage>
</organism>
<gene>
    <name type="primary">NDUFB1</name>
</gene>
<feature type="chain" id="PRO_0000251824" description="NADH dehydrogenase [ubiquinone] 1 beta subcomplex subunit 1">
    <location>
        <begin position="1"/>
        <end position="58"/>
    </location>
</feature>
<feature type="transmembrane region" description="Helical" evidence="2">
    <location>
        <begin position="11"/>
        <end position="27"/>
    </location>
</feature>
<reference key="1">
    <citation type="journal article" date="2006" name="Gene">
        <title>Adaptive selection of mitochondrial complex I subunits during primate radiation.</title>
        <authorList>
            <person name="Mishmar D."/>
            <person name="Ruiz-Pesini E."/>
            <person name="Mondragon-Palomino M."/>
            <person name="Procaccio V."/>
            <person name="Gaut B."/>
            <person name="Wallace D.C."/>
        </authorList>
    </citation>
    <scope>NUCLEOTIDE SEQUENCE [MRNA]</scope>
</reference>
<evidence type="ECO:0000250" key="1">
    <source>
        <dbReference type="UniProtKB" id="O75438"/>
    </source>
</evidence>
<evidence type="ECO:0000255" key="2"/>
<evidence type="ECO:0000305" key="3"/>
<comment type="function">
    <text evidence="1">Accessory subunit of the mitochondrial membrane respiratory chain NADH dehydrogenase (Complex I) that is believed not to be involved in catalysis. Complex I functions in the transfer of electrons from NADH to the respiratory chain. The immediate electron acceptor for the enzyme is believed to be ubiquinone.</text>
</comment>
<comment type="subunit">
    <text evidence="1">Complex I is composed of 45 different subunits.</text>
</comment>
<comment type="subcellular location">
    <subcellularLocation>
        <location evidence="1">Mitochondrion inner membrane</location>
        <topology evidence="2">Single-pass membrane protein</topology>
        <orientation evidence="1">Matrix side</orientation>
    </subcellularLocation>
</comment>
<comment type="similarity">
    <text evidence="3">Belongs to the complex I NDUFB1 subunit family.</text>
</comment>